<feature type="chain" id="PRO_0000272050" description="Lipoprotein-releasing system ATP-binding protein LolD">
    <location>
        <begin position="1"/>
        <end position="223"/>
    </location>
</feature>
<feature type="domain" description="ABC transporter" evidence="1">
    <location>
        <begin position="1"/>
        <end position="223"/>
    </location>
</feature>
<feature type="binding site" evidence="1">
    <location>
        <begin position="32"/>
        <end position="39"/>
    </location>
    <ligand>
        <name>ATP</name>
        <dbReference type="ChEBI" id="CHEBI:30616"/>
    </ligand>
</feature>
<protein>
    <recommendedName>
        <fullName evidence="1">Lipoprotein-releasing system ATP-binding protein LolD</fullName>
        <ecNumber evidence="1">7.6.2.-</ecNumber>
    </recommendedName>
</protein>
<accession>Q1IKM7</accession>
<keyword id="KW-0067">ATP-binding</keyword>
<keyword id="KW-0997">Cell inner membrane</keyword>
<keyword id="KW-1003">Cell membrane</keyword>
<keyword id="KW-0472">Membrane</keyword>
<keyword id="KW-0547">Nucleotide-binding</keyword>
<keyword id="KW-1185">Reference proteome</keyword>
<keyword id="KW-1278">Translocase</keyword>
<keyword id="KW-0813">Transport</keyword>
<dbReference type="EC" id="7.6.2.-" evidence="1"/>
<dbReference type="EMBL" id="CP000360">
    <property type="protein sequence ID" value="ABF42573.1"/>
    <property type="status" value="ALT_INIT"/>
    <property type="molecule type" value="Genomic_DNA"/>
</dbReference>
<dbReference type="RefSeq" id="WP_049761963.1">
    <property type="nucleotide sequence ID" value="NC_008009.1"/>
</dbReference>
<dbReference type="SMR" id="Q1IKM7"/>
<dbReference type="STRING" id="204669.Acid345_3572"/>
<dbReference type="EnsemblBacteria" id="ABF42573">
    <property type="protein sequence ID" value="ABF42573"/>
    <property type="gene ID" value="Acid345_3572"/>
</dbReference>
<dbReference type="KEGG" id="aba:Acid345_3572"/>
<dbReference type="eggNOG" id="COG1136">
    <property type="taxonomic scope" value="Bacteria"/>
</dbReference>
<dbReference type="HOGENOM" id="CLU_000604_1_22_0"/>
<dbReference type="Proteomes" id="UP000002432">
    <property type="component" value="Chromosome"/>
</dbReference>
<dbReference type="GO" id="GO:0005886">
    <property type="term" value="C:plasma membrane"/>
    <property type="evidence" value="ECO:0007669"/>
    <property type="project" value="UniProtKB-SubCell"/>
</dbReference>
<dbReference type="GO" id="GO:0005524">
    <property type="term" value="F:ATP binding"/>
    <property type="evidence" value="ECO:0007669"/>
    <property type="project" value="UniProtKB-KW"/>
</dbReference>
<dbReference type="GO" id="GO:0016887">
    <property type="term" value="F:ATP hydrolysis activity"/>
    <property type="evidence" value="ECO:0007669"/>
    <property type="project" value="InterPro"/>
</dbReference>
<dbReference type="GO" id="GO:0022857">
    <property type="term" value="F:transmembrane transporter activity"/>
    <property type="evidence" value="ECO:0007669"/>
    <property type="project" value="TreeGrafter"/>
</dbReference>
<dbReference type="CDD" id="cd03255">
    <property type="entry name" value="ABC_MJ0796_LolCDE_FtsE"/>
    <property type="match status" value="1"/>
</dbReference>
<dbReference type="FunFam" id="3.40.50.300:FF:000032">
    <property type="entry name" value="Export ABC transporter ATP-binding protein"/>
    <property type="match status" value="1"/>
</dbReference>
<dbReference type="Gene3D" id="3.40.50.300">
    <property type="entry name" value="P-loop containing nucleotide triphosphate hydrolases"/>
    <property type="match status" value="1"/>
</dbReference>
<dbReference type="InterPro" id="IPR003593">
    <property type="entry name" value="AAA+_ATPase"/>
</dbReference>
<dbReference type="InterPro" id="IPR003439">
    <property type="entry name" value="ABC_transporter-like_ATP-bd"/>
</dbReference>
<dbReference type="InterPro" id="IPR017871">
    <property type="entry name" value="ABC_transporter-like_CS"/>
</dbReference>
<dbReference type="InterPro" id="IPR015854">
    <property type="entry name" value="ABC_transpr_LolD-like"/>
</dbReference>
<dbReference type="InterPro" id="IPR017911">
    <property type="entry name" value="MacB-like_ATP-bd"/>
</dbReference>
<dbReference type="InterPro" id="IPR027417">
    <property type="entry name" value="P-loop_NTPase"/>
</dbReference>
<dbReference type="PANTHER" id="PTHR24220">
    <property type="entry name" value="IMPORT ATP-BINDING PROTEIN"/>
    <property type="match status" value="1"/>
</dbReference>
<dbReference type="PANTHER" id="PTHR24220:SF689">
    <property type="entry name" value="LIPOPROTEIN-RELEASING SYSTEM ATP-BINDING PROTEIN LOLD"/>
    <property type="match status" value="1"/>
</dbReference>
<dbReference type="Pfam" id="PF00005">
    <property type="entry name" value="ABC_tran"/>
    <property type="match status" value="1"/>
</dbReference>
<dbReference type="SMART" id="SM00382">
    <property type="entry name" value="AAA"/>
    <property type="match status" value="1"/>
</dbReference>
<dbReference type="SUPFAM" id="SSF52540">
    <property type="entry name" value="P-loop containing nucleoside triphosphate hydrolases"/>
    <property type="match status" value="1"/>
</dbReference>
<dbReference type="PROSITE" id="PS00211">
    <property type="entry name" value="ABC_TRANSPORTER_1"/>
    <property type="match status" value="1"/>
</dbReference>
<dbReference type="PROSITE" id="PS50893">
    <property type="entry name" value="ABC_TRANSPORTER_2"/>
    <property type="match status" value="1"/>
</dbReference>
<dbReference type="PROSITE" id="PS51244">
    <property type="entry name" value="LOLD"/>
    <property type="match status" value="1"/>
</dbReference>
<evidence type="ECO:0000255" key="1">
    <source>
        <dbReference type="HAMAP-Rule" id="MF_01708"/>
    </source>
</evidence>
<evidence type="ECO:0000305" key="2"/>
<reference key="1">
    <citation type="journal article" date="2009" name="Appl. Environ. Microbiol.">
        <title>Three genomes from the phylum Acidobacteria provide insight into the lifestyles of these microorganisms in soils.</title>
        <authorList>
            <person name="Ward N.L."/>
            <person name="Challacombe J.F."/>
            <person name="Janssen P.H."/>
            <person name="Henrissat B."/>
            <person name="Coutinho P.M."/>
            <person name="Wu M."/>
            <person name="Xie G."/>
            <person name="Haft D.H."/>
            <person name="Sait M."/>
            <person name="Badger J."/>
            <person name="Barabote R.D."/>
            <person name="Bradley B."/>
            <person name="Brettin T.S."/>
            <person name="Brinkac L.M."/>
            <person name="Bruce D."/>
            <person name="Creasy T."/>
            <person name="Daugherty S.C."/>
            <person name="Davidsen T.M."/>
            <person name="DeBoy R.T."/>
            <person name="Detter J.C."/>
            <person name="Dodson R.J."/>
            <person name="Durkin A.S."/>
            <person name="Ganapathy A."/>
            <person name="Gwinn-Giglio M."/>
            <person name="Han C.S."/>
            <person name="Khouri H."/>
            <person name="Kiss H."/>
            <person name="Kothari S.P."/>
            <person name="Madupu R."/>
            <person name="Nelson K.E."/>
            <person name="Nelson W.C."/>
            <person name="Paulsen I."/>
            <person name="Penn K."/>
            <person name="Ren Q."/>
            <person name="Rosovitz M.J."/>
            <person name="Selengut J.D."/>
            <person name="Shrivastava S."/>
            <person name="Sullivan S.A."/>
            <person name="Tapia R."/>
            <person name="Thompson L.S."/>
            <person name="Watkins K.L."/>
            <person name="Yang Q."/>
            <person name="Yu C."/>
            <person name="Zafar N."/>
            <person name="Zhou L."/>
            <person name="Kuske C.R."/>
        </authorList>
    </citation>
    <scope>NUCLEOTIDE SEQUENCE [LARGE SCALE GENOMIC DNA]</scope>
    <source>
        <strain>Ellin345</strain>
    </source>
</reference>
<name>LOLD_KORVE</name>
<organism>
    <name type="scientific">Koribacter versatilis (strain Ellin345)</name>
    <dbReference type="NCBI Taxonomy" id="204669"/>
    <lineage>
        <taxon>Bacteria</taxon>
        <taxon>Pseudomonadati</taxon>
        <taxon>Acidobacteriota</taxon>
        <taxon>Terriglobia</taxon>
        <taxon>Terriglobales</taxon>
        <taxon>Candidatus Korobacteraceae</taxon>
        <taxon>Candidatus Korobacter</taxon>
    </lineage>
</organism>
<sequence>MAKVFRSGSTDLRLFENLSFQVMKGEMVAIVGDSGSGKSSLLHILGALDRPSDGDVYFAELRLAKLSEAAAAEFRNRELGFVWQFHYLLPEFTALENIAMPLLVRGLGRREAETEARHWLNEVGLLDRGHHRPGELSGGEQQRVALARALVTRPKVLMADEPTGDLDNRTAETVFNLIARLHRDYQLTSLIVTHNLAFARRCDRVIRLAAGVVDEVEPQSLPA</sequence>
<gene>
    <name evidence="1" type="primary">lolD</name>
    <name type="ordered locus">Acid345_3572</name>
</gene>
<proteinExistence type="inferred from homology"/>
<comment type="function">
    <text evidence="1">Part of the ABC transporter complex LolCDE involved in the translocation of mature outer membrane-directed lipoproteins, from the inner membrane to the periplasmic chaperone, LolA. Responsible for the formation of the LolA-lipoprotein complex in an ATP-dependent manner.</text>
</comment>
<comment type="subunit">
    <text evidence="1">The complex is composed of two ATP-binding proteins (LolD) and two transmembrane proteins (LolC and LolE).</text>
</comment>
<comment type="subcellular location">
    <subcellularLocation>
        <location evidence="1">Cell inner membrane</location>
        <topology evidence="1">Peripheral membrane protein</topology>
    </subcellularLocation>
</comment>
<comment type="similarity">
    <text evidence="1">Belongs to the ABC transporter superfamily. Lipoprotein translocase (TC 3.A.1.125) family.</text>
</comment>
<comment type="sequence caution" evidence="2">
    <conflict type="erroneous initiation">
        <sequence resource="EMBL-CDS" id="ABF42573"/>
    </conflict>
</comment>